<keyword id="KW-0007">Acetylation</keyword>
<keyword id="KW-0029">Amino-acid transport</keyword>
<keyword id="KW-0458">Lysosome</keyword>
<keyword id="KW-0470">Melanin biosynthesis</keyword>
<keyword id="KW-0472">Membrane</keyword>
<keyword id="KW-1185">Reference proteome</keyword>
<keyword id="KW-0812">Transmembrane</keyword>
<keyword id="KW-1133">Transmembrane helix</keyword>
<keyword id="KW-0813">Transport</keyword>
<sequence>MVPGSPAAGAGPAPRALSLAARLSYAVGHFLNDLCASMWFTYLLLYLHSVRAYSSRGAGLLLLLGQVADGLCTPLVGYEADRAAGRCARCGPRKAWHLVGTVCVLLSFPFIFSPCLGCGAATPEWAALLYYGPFIVVFQFGWAATQIAHLSLIPELVTSDHEKVELTALRYAFTVVANITVFGAAWLLLRLQGSAREGPPDEAGDHLGVQDVPVFRTLSLCVVGVGAVFSLLFHLGTRERRRPPAQEPDERSPLLAPATARPLLLWKHWLREPSFYQVGLLYMSTRLIVNLSQTYIAMYLTYSLNLPKKFIATIPLVMYVSGFCSSFLMKPVNKCIGRNMTYFVGLLVILAFAAWVVLVDELGMAVYVAAVLLGGGCATILVTSLAMTADLIGPHTHSGAFVYGAMSFSDKVANGLAVMVIQSLHPCSLELCCRACVGFYHWVMVAVTGGVGVAATLSLCSLLVWPIRLRSWDPGAQP</sequence>
<gene>
    <name evidence="1" type="primary">MFSD12</name>
</gene>
<proteinExistence type="inferred from homology"/>
<name>MFS12_HORSE</name>
<reference key="1">
    <citation type="journal article" date="2009" name="Science">
        <title>Genome sequence, comparative analysis, and population genetics of the domestic horse.</title>
        <authorList>
            <person name="Wade C.M."/>
            <person name="Giulotto E."/>
            <person name="Sigurdsson S."/>
            <person name="Zoli M."/>
            <person name="Gnerre S."/>
            <person name="Imsland F."/>
            <person name="Lear T.L."/>
            <person name="Adelson D.L."/>
            <person name="Bailey E."/>
            <person name="Bellone R.R."/>
            <person name="Bloecker H."/>
            <person name="Distl O."/>
            <person name="Edgar R.C."/>
            <person name="Garber M."/>
            <person name="Leeb T."/>
            <person name="Mauceli E."/>
            <person name="MacLeod J.N."/>
            <person name="Penedo M.C.T."/>
            <person name="Raison J.M."/>
            <person name="Sharpe T."/>
            <person name="Vogel J."/>
            <person name="Andersson L."/>
            <person name="Antczak D.F."/>
            <person name="Biagi T."/>
            <person name="Binns M.M."/>
            <person name="Chowdhary B.P."/>
            <person name="Coleman S.J."/>
            <person name="Della Valle G."/>
            <person name="Fryc S."/>
            <person name="Guerin G."/>
            <person name="Hasegawa T."/>
            <person name="Hill E.W."/>
            <person name="Jurka J."/>
            <person name="Kiialainen A."/>
            <person name="Lindgren G."/>
            <person name="Liu J."/>
            <person name="Magnani E."/>
            <person name="Mickelson J.R."/>
            <person name="Murray J."/>
            <person name="Nergadze S.G."/>
            <person name="Onofrio R."/>
            <person name="Pedroni S."/>
            <person name="Piras M.F."/>
            <person name="Raudsepp T."/>
            <person name="Rocchi M."/>
            <person name="Roeed K.H."/>
            <person name="Ryder O.A."/>
            <person name="Searle S."/>
            <person name="Skow L."/>
            <person name="Swinburne J.E."/>
            <person name="Syvaenen A.C."/>
            <person name="Tozaki T."/>
            <person name="Valberg S.J."/>
            <person name="Vaudin M."/>
            <person name="White J.R."/>
            <person name="Zody M.C."/>
            <person name="Lander E.S."/>
            <person name="Lindblad-Toh K."/>
        </authorList>
    </citation>
    <scope>NUCLEOTIDE SEQUENCE [LARGE SCALE GENOMIC DNA]</scope>
    <source>
        <strain>Thoroughbred</strain>
    </source>
</reference>
<reference key="2">
    <citation type="journal article" date="2019" name="Genes (Basel)">
        <title>Frameshift variant in MFSD12 explains the mushroom coat color dilution in shetland ponies.</title>
        <authorList>
            <person name="Tanaka J."/>
            <person name="Leeb T."/>
            <person name="Rushton J."/>
            <person name="Famula T.R."/>
            <person name="Mack M."/>
            <person name="Jagannathan V."/>
            <person name="Flury C."/>
            <person name="Bachmann I."/>
            <person name="Eberth J."/>
            <person name="McDonnell S.M."/>
            <person name="Penedo M.C.T."/>
            <person name="Bellone R.R."/>
        </authorList>
    </citation>
    <scope>POLYMORPHISM</scope>
</reference>
<feature type="chain" id="PRO_0000452203" description="Major facilitator superfamily domain-containing protein 12">
    <location>
        <begin position="1"/>
        <end position="478"/>
    </location>
</feature>
<feature type="topological domain" description="Cytoplasmic" evidence="4">
    <location>
        <begin position="1"/>
        <end position="26"/>
    </location>
</feature>
<feature type="transmembrane region" description="Helical" evidence="2">
    <location>
        <begin position="27"/>
        <end position="47"/>
    </location>
</feature>
<feature type="topological domain" description="Lumenal" evidence="4">
    <location>
        <begin position="48"/>
        <end position="56"/>
    </location>
</feature>
<feature type="transmembrane region" description="Helical" evidence="2">
    <location>
        <begin position="57"/>
        <end position="77"/>
    </location>
</feature>
<feature type="topological domain" description="Cytoplasmic" evidence="4">
    <location>
        <begin position="78"/>
        <end position="97"/>
    </location>
</feature>
<feature type="transmembrane region" description="Helical" evidence="2">
    <location>
        <begin position="98"/>
        <end position="118"/>
    </location>
</feature>
<feature type="topological domain" description="Lumenal" evidence="4">
    <location>
        <begin position="119"/>
        <end position="124"/>
    </location>
</feature>
<feature type="transmembrane region" description="Helical" evidence="2">
    <location>
        <begin position="125"/>
        <end position="145"/>
    </location>
</feature>
<feature type="topological domain" description="Cytoplasmic" evidence="4">
    <location>
        <begin position="146"/>
        <end position="168"/>
    </location>
</feature>
<feature type="transmembrane region" description="Helical" evidence="2">
    <location>
        <begin position="169"/>
        <end position="189"/>
    </location>
</feature>
<feature type="topological domain" description="Lumenal" evidence="4">
    <location>
        <begin position="190"/>
        <end position="216"/>
    </location>
</feature>
<feature type="transmembrane region" description="Helical" evidence="2">
    <location>
        <begin position="217"/>
        <end position="237"/>
    </location>
</feature>
<feature type="topological domain" description="Cytoplasmic" evidence="4">
    <location>
        <begin position="238"/>
        <end position="277"/>
    </location>
</feature>
<feature type="transmembrane region" description="Helical" evidence="2">
    <location>
        <begin position="278"/>
        <end position="300"/>
    </location>
</feature>
<feature type="topological domain" description="Lumenal" evidence="4">
    <location>
        <begin position="301"/>
        <end position="308"/>
    </location>
</feature>
<feature type="transmembrane region" description="Helical" evidence="2">
    <location>
        <begin position="309"/>
        <end position="329"/>
    </location>
</feature>
<feature type="topological domain" description="Cytoplasmic" evidence="4">
    <location>
        <begin position="330"/>
        <end position="338"/>
    </location>
</feature>
<feature type="transmembrane region" description="Helical" evidence="2">
    <location>
        <begin position="339"/>
        <end position="359"/>
    </location>
</feature>
<feature type="topological domain" description="Lumenal" evidence="4">
    <location>
        <begin position="360"/>
        <end position="361"/>
    </location>
</feature>
<feature type="transmembrane region" description="Helical" evidence="2">
    <location>
        <begin position="362"/>
        <end position="382"/>
    </location>
</feature>
<feature type="topological domain" description="Cytoplasmic" evidence="4">
    <location>
        <begin position="383"/>
        <end position="400"/>
    </location>
</feature>
<feature type="transmembrane region" description="Helical" evidence="2">
    <location>
        <begin position="401"/>
        <end position="421"/>
    </location>
</feature>
<feature type="topological domain" description="Lumenal" evidence="4">
    <location>
        <begin position="422"/>
        <end position="436"/>
    </location>
</feature>
<feature type="transmembrane region" description="Helical" evidence="2">
    <location>
        <begin position="437"/>
        <end position="457"/>
    </location>
</feature>
<feature type="topological domain" description="Cytoplasmic" evidence="4">
    <location>
        <begin position="458"/>
        <end position="478"/>
    </location>
</feature>
<feature type="modified residue" description="N-acetylmethionine" evidence="1">
    <location>
        <position position="1"/>
    </location>
</feature>
<accession>A0A3Q2HW92</accession>
<comment type="function">
    <text evidence="1">Transporter that mediates the import of cysteine into melanosomes, thereby regulating skin/hair pigmentation. In melanosomes, cysteine import is required both for normal levels of cystine, the oxidized dimer of cysteine, and provide cysteine for the production of the cysteinyldopas used in pheomelanin synthesis, thereby regulating skin/hair pigmentation. Also catalyzes import of cysteine into lysosomes in non-pigmented cells, regulating lysosomal cystine and cysteine storage, which is essnetial for redox homeostasis.</text>
</comment>
<comment type="catalytic activity">
    <reaction evidence="1">
        <text>L-cysteine(in) = L-cysteine(out)</text>
        <dbReference type="Rhea" id="RHEA:29655"/>
        <dbReference type="ChEBI" id="CHEBI:35235"/>
    </reaction>
    <physiologicalReaction direction="left-to-right" evidence="1">
        <dbReference type="Rhea" id="RHEA:29656"/>
    </physiologicalReaction>
</comment>
<comment type="subcellular location">
    <subcellularLocation>
        <location evidence="1">Melanosome membrane</location>
        <topology evidence="2">Multi-pass membrane protein</topology>
    </subcellularLocation>
    <subcellularLocation>
        <location evidence="1">Lysosome membrane</location>
        <topology evidence="2">Multi-pass membrane protein</topology>
    </subcellularLocation>
</comment>
<comment type="polymorphism">
    <text evidence="3">Genetic variants in MFSD12 cause skin/hair pigmentation variations and are the cause of mushroom coat color in shetland ponies.</text>
</comment>
<comment type="similarity">
    <text evidence="4">Belongs to the major facilitator superfamily.</text>
</comment>
<organism>
    <name type="scientific">Equus caballus</name>
    <name type="common">Horse</name>
    <dbReference type="NCBI Taxonomy" id="9796"/>
    <lineage>
        <taxon>Eukaryota</taxon>
        <taxon>Metazoa</taxon>
        <taxon>Chordata</taxon>
        <taxon>Craniata</taxon>
        <taxon>Vertebrata</taxon>
        <taxon>Euteleostomi</taxon>
        <taxon>Mammalia</taxon>
        <taxon>Eutheria</taxon>
        <taxon>Laurasiatheria</taxon>
        <taxon>Perissodactyla</taxon>
        <taxon>Equidae</taxon>
        <taxon>Equus</taxon>
    </lineage>
</organism>
<evidence type="ECO:0000250" key="1">
    <source>
        <dbReference type="UniProtKB" id="Q6NUT3"/>
    </source>
</evidence>
<evidence type="ECO:0000255" key="2"/>
<evidence type="ECO:0000269" key="3">
    <source>
    </source>
</evidence>
<evidence type="ECO:0000305" key="4"/>
<dbReference type="SMR" id="A0A3Q2HW92"/>
<dbReference type="FunCoup" id="A0A3Q2HW92">
    <property type="interactions" value="869"/>
</dbReference>
<dbReference type="Ensembl" id="ENSECAT00000034043.3">
    <property type="protein sequence ID" value="ENSECAP00000039637.2"/>
    <property type="gene ID" value="ENSECAG00000050601.1"/>
</dbReference>
<dbReference type="GeneTree" id="ENSGT00390000005318"/>
<dbReference type="InParanoid" id="A0A3Q2HW92"/>
<dbReference type="OrthoDB" id="1730117at2759"/>
<dbReference type="Proteomes" id="UP000002281">
    <property type="component" value="Chromosome 7"/>
</dbReference>
<dbReference type="Bgee" id="ENSECAG00000039454">
    <property type="expression patterns" value="Expressed in trophoblast and 23 other cell types or tissues"/>
</dbReference>
<dbReference type="ExpressionAtlas" id="A0A3Q2HW92">
    <property type="expression patterns" value="baseline"/>
</dbReference>
<dbReference type="GO" id="GO:0005737">
    <property type="term" value="C:cytoplasm"/>
    <property type="evidence" value="ECO:0000318"/>
    <property type="project" value="GO_Central"/>
</dbReference>
<dbReference type="GO" id="GO:0005770">
    <property type="term" value="C:late endosome"/>
    <property type="evidence" value="ECO:0007669"/>
    <property type="project" value="Ensembl"/>
</dbReference>
<dbReference type="GO" id="GO:0005765">
    <property type="term" value="C:lysosomal membrane"/>
    <property type="evidence" value="ECO:0007669"/>
    <property type="project" value="UniProtKB-SubCell"/>
</dbReference>
<dbReference type="GO" id="GO:0005764">
    <property type="term" value="C:lysosome"/>
    <property type="evidence" value="ECO:0000250"/>
    <property type="project" value="UniProtKB"/>
</dbReference>
<dbReference type="GO" id="GO:0033162">
    <property type="term" value="C:melanosome membrane"/>
    <property type="evidence" value="ECO:0007669"/>
    <property type="project" value="UniProtKB-SubCell"/>
</dbReference>
<dbReference type="GO" id="GO:0016604">
    <property type="term" value="C:nuclear body"/>
    <property type="evidence" value="ECO:0000318"/>
    <property type="project" value="GO_Central"/>
</dbReference>
<dbReference type="GO" id="GO:0033229">
    <property type="term" value="F:cysteine transmembrane transporter activity"/>
    <property type="evidence" value="ECO:0000250"/>
    <property type="project" value="UniProtKB"/>
</dbReference>
<dbReference type="GO" id="GO:0043021">
    <property type="term" value="F:ribonucleoprotein complex binding"/>
    <property type="evidence" value="ECO:0000318"/>
    <property type="project" value="GO_Central"/>
</dbReference>
<dbReference type="GO" id="GO:0015293">
    <property type="term" value="F:symporter activity"/>
    <property type="evidence" value="ECO:0007669"/>
    <property type="project" value="InterPro"/>
</dbReference>
<dbReference type="GO" id="GO:0000380">
    <property type="term" value="P:alternative mRNA splicing, via spliceosome"/>
    <property type="evidence" value="ECO:0000318"/>
    <property type="project" value="GO_Central"/>
</dbReference>
<dbReference type="GO" id="GO:0008643">
    <property type="term" value="P:carbohydrate transport"/>
    <property type="evidence" value="ECO:0007669"/>
    <property type="project" value="InterPro"/>
</dbReference>
<dbReference type="GO" id="GO:1903712">
    <property type="term" value="P:cysteine transmembrane transport"/>
    <property type="evidence" value="ECO:0000250"/>
    <property type="project" value="UniProtKB"/>
</dbReference>
<dbReference type="GO" id="GO:0042438">
    <property type="term" value="P:melanin biosynthetic process"/>
    <property type="evidence" value="ECO:0007669"/>
    <property type="project" value="UniProtKB-KW"/>
</dbReference>
<dbReference type="GO" id="GO:0048022">
    <property type="term" value="P:negative regulation of melanin biosynthetic process"/>
    <property type="evidence" value="ECO:0007669"/>
    <property type="project" value="Ensembl"/>
</dbReference>
<dbReference type="GO" id="GO:0043474">
    <property type="term" value="P:pigment metabolic process involved in pigmentation"/>
    <property type="evidence" value="ECO:0000315"/>
    <property type="project" value="UniProtKB"/>
</dbReference>
<dbReference type="CDD" id="cd17491">
    <property type="entry name" value="MFS_MFSD12"/>
    <property type="match status" value="1"/>
</dbReference>
<dbReference type="FunFam" id="1.20.1250.20:FF:000206">
    <property type="entry name" value="Major facilitator superfamily domain containing 12"/>
    <property type="match status" value="1"/>
</dbReference>
<dbReference type="FunFam" id="1.20.1250.20:FF:000219">
    <property type="entry name" value="major facilitator superfamily domain-containing protein 12 isoform X3"/>
    <property type="match status" value="1"/>
</dbReference>
<dbReference type="Gene3D" id="1.20.1250.20">
    <property type="entry name" value="MFS general substrate transporter like domains"/>
    <property type="match status" value="2"/>
</dbReference>
<dbReference type="InterPro" id="IPR039672">
    <property type="entry name" value="MFS_2"/>
</dbReference>
<dbReference type="InterPro" id="IPR036259">
    <property type="entry name" value="MFS_trans_sf"/>
</dbReference>
<dbReference type="PANTHER" id="PTHR11328">
    <property type="entry name" value="MAJOR FACILITATOR SUPERFAMILY DOMAIN-CONTAINING PROTEIN"/>
    <property type="match status" value="1"/>
</dbReference>
<dbReference type="PANTHER" id="PTHR11328:SF28">
    <property type="entry name" value="MAJOR FACILITATOR SUPERFAMILY DOMAIN-CONTAINING PROTEIN 12"/>
    <property type="match status" value="1"/>
</dbReference>
<dbReference type="Pfam" id="PF13347">
    <property type="entry name" value="MFS_2"/>
    <property type="match status" value="1"/>
</dbReference>
<dbReference type="SUPFAM" id="SSF103473">
    <property type="entry name" value="MFS general substrate transporter"/>
    <property type="match status" value="1"/>
</dbReference>
<protein>
    <recommendedName>
        <fullName evidence="4">Major facilitator superfamily domain-containing protein 12</fullName>
    </recommendedName>
</protein>